<dbReference type="EC" id="2.1.1.37" evidence="4"/>
<dbReference type="EMBL" id="J02677">
    <property type="protein sequence ID" value="AAA24989.1"/>
    <property type="molecule type" value="Genomic_DNA"/>
</dbReference>
<dbReference type="PIR" id="A26260">
    <property type="entry name" value="XYHIH1"/>
</dbReference>
<dbReference type="PDB" id="10MH">
    <property type="method" value="X-ray"/>
    <property type="resolution" value="2.55 A"/>
    <property type="chains" value="A=1-327"/>
</dbReference>
<dbReference type="PDB" id="1FJX">
    <property type="method" value="X-ray"/>
    <property type="resolution" value="2.26 A"/>
    <property type="chains" value="A=1-327"/>
</dbReference>
<dbReference type="PDB" id="1HMY">
    <property type="method" value="X-ray"/>
    <property type="resolution" value="2.50 A"/>
    <property type="chains" value="A=1-327"/>
</dbReference>
<dbReference type="PDB" id="1M0E">
    <property type="method" value="X-ray"/>
    <property type="resolution" value="2.50 A"/>
    <property type="chains" value="A=1-327"/>
</dbReference>
<dbReference type="PDB" id="1MHT">
    <property type="method" value="X-ray"/>
    <property type="resolution" value="2.60 A"/>
    <property type="chains" value="A=1-327"/>
</dbReference>
<dbReference type="PDB" id="1SKM">
    <property type="method" value="X-ray"/>
    <property type="resolution" value="2.20 A"/>
    <property type="chains" value="A=1-327"/>
</dbReference>
<dbReference type="PDB" id="1SVU">
    <property type="method" value="X-ray"/>
    <property type="resolution" value="2.66 A"/>
    <property type="chains" value="A/B=1-327"/>
</dbReference>
<dbReference type="PDB" id="2C7O">
    <property type="method" value="X-ray"/>
    <property type="resolution" value="1.90 A"/>
    <property type="chains" value="A=1-327"/>
</dbReference>
<dbReference type="PDB" id="2C7P">
    <property type="method" value="X-ray"/>
    <property type="resolution" value="1.70 A"/>
    <property type="chains" value="A=1-327"/>
</dbReference>
<dbReference type="PDB" id="2C7Q">
    <property type="method" value="X-ray"/>
    <property type="resolution" value="1.85 A"/>
    <property type="chains" value="A=1-327"/>
</dbReference>
<dbReference type="PDB" id="2C7R">
    <property type="method" value="X-ray"/>
    <property type="resolution" value="1.90 A"/>
    <property type="chains" value="A=1-327"/>
</dbReference>
<dbReference type="PDB" id="2HMY">
    <property type="method" value="X-ray"/>
    <property type="resolution" value="2.61 A"/>
    <property type="chains" value="B=1-327"/>
</dbReference>
<dbReference type="PDB" id="2HR1">
    <property type="method" value="X-ray"/>
    <property type="resolution" value="1.96 A"/>
    <property type="chains" value="A=1-327"/>
</dbReference>
<dbReference type="PDB" id="2I9K">
    <property type="method" value="X-ray"/>
    <property type="resolution" value="2.65 A"/>
    <property type="chains" value="A=1-327"/>
</dbReference>
<dbReference type="PDB" id="2UYC">
    <property type="method" value="X-ray"/>
    <property type="resolution" value="2.00 A"/>
    <property type="chains" value="A=1-327"/>
</dbReference>
<dbReference type="PDB" id="2UYH">
    <property type="method" value="X-ray"/>
    <property type="resolution" value="2.63 A"/>
    <property type="chains" value="A=1-327"/>
</dbReference>
<dbReference type="PDB" id="2UZ4">
    <property type="method" value="X-ray"/>
    <property type="resolution" value="2.10 A"/>
    <property type="chains" value="A=1-327"/>
</dbReference>
<dbReference type="PDB" id="2Z6A">
    <property type="method" value="X-ray"/>
    <property type="resolution" value="2.88 A"/>
    <property type="chains" value="A=1-327"/>
</dbReference>
<dbReference type="PDB" id="2Z6Q">
    <property type="method" value="X-ray"/>
    <property type="resolution" value="2.79 A"/>
    <property type="chains" value="A=1-327"/>
</dbReference>
<dbReference type="PDB" id="2Z6U">
    <property type="method" value="X-ray"/>
    <property type="resolution" value="2.72 A"/>
    <property type="chains" value="A=1-327"/>
</dbReference>
<dbReference type="PDB" id="2ZCJ">
    <property type="method" value="X-ray"/>
    <property type="resolution" value="2.75 A"/>
    <property type="chains" value="A=1-327"/>
</dbReference>
<dbReference type="PDB" id="3EEO">
    <property type="method" value="X-ray"/>
    <property type="resolution" value="1.94 A"/>
    <property type="chains" value="A=1-327"/>
</dbReference>
<dbReference type="PDB" id="3MHT">
    <property type="method" value="X-ray"/>
    <property type="resolution" value="2.70 A"/>
    <property type="chains" value="A=1-327"/>
</dbReference>
<dbReference type="PDB" id="4MHT">
    <property type="method" value="X-ray"/>
    <property type="resolution" value="2.70 A"/>
    <property type="chains" value="A=1-327"/>
</dbReference>
<dbReference type="PDB" id="5CIY">
    <property type="method" value="X-ray"/>
    <property type="resolution" value="1.59 A"/>
    <property type="chains" value="A=1-327"/>
</dbReference>
<dbReference type="PDB" id="5LOD">
    <property type="method" value="X-ray"/>
    <property type="resolution" value="1.90 A"/>
    <property type="chains" value="A/B=1-327"/>
</dbReference>
<dbReference type="PDB" id="5MHT">
    <property type="method" value="X-ray"/>
    <property type="resolution" value="2.70 A"/>
    <property type="chains" value="A=1-327"/>
</dbReference>
<dbReference type="PDB" id="6MHT">
    <property type="method" value="X-ray"/>
    <property type="resolution" value="2.05 A"/>
    <property type="chains" value="A=1-327"/>
</dbReference>
<dbReference type="PDB" id="7MHT">
    <property type="method" value="X-ray"/>
    <property type="resolution" value="2.87 A"/>
    <property type="chains" value="A=1-327"/>
</dbReference>
<dbReference type="PDB" id="8MHT">
    <property type="method" value="X-ray"/>
    <property type="resolution" value="2.76 A"/>
    <property type="chains" value="A=1-327"/>
</dbReference>
<dbReference type="PDB" id="9MHT">
    <property type="method" value="X-ray"/>
    <property type="resolution" value="2.39 A"/>
    <property type="chains" value="A=1-327"/>
</dbReference>
<dbReference type="PDBsum" id="10MH"/>
<dbReference type="PDBsum" id="1FJX"/>
<dbReference type="PDBsum" id="1HMY"/>
<dbReference type="PDBsum" id="1M0E"/>
<dbReference type="PDBsum" id="1MHT"/>
<dbReference type="PDBsum" id="1SKM"/>
<dbReference type="PDBsum" id="1SVU"/>
<dbReference type="PDBsum" id="2C7O"/>
<dbReference type="PDBsum" id="2C7P"/>
<dbReference type="PDBsum" id="2C7Q"/>
<dbReference type="PDBsum" id="2C7R"/>
<dbReference type="PDBsum" id="2HMY"/>
<dbReference type="PDBsum" id="2HR1"/>
<dbReference type="PDBsum" id="2I9K"/>
<dbReference type="PDBsum" id="2UYC"/>
<dbReference type="PDBsum" id="2UYH"/>
<dbReference type="PDBsum" id="2UZ4"/>
<dbReference type="PDBsum" id="2Z6A"/>
<dbReference type="PDBsum" id="2Z6Q"/>
<dbReference type="PDBsum" id="2Z6U"/>
<dbReference type="PDBsum" id="2ZCJ"/>
<dbReference type="PDBsum" id="3EEO"/>
<dbReference type="PDBsum" id="3MHT"/>
<dbReference type="PDBsum" id="4MHT"/>
<dbReference type="PDBsum" id="5CIY"/>
<dbReference type="PDBsum" id="5LOD"/>
<dbReference type="PDBsum" id="5MHT"/>
<dbReference type="PDBsum" id="6MHT"/>
<dbReference type="PDBsum" id="7MHT"/>
<dbReference type="PDBsum" id="8MHT"/>
<dbReference type="PDBsum" id="9MHT"/>
<dbReference type="BMRB" id="P05102"/>
<dbReference type="SMR" id="P05102"/>
<dbReference type="DrugBank" id="DB01752">
    <property type="generic name" value="S-adenosyl-L-homocysteine"/>
</dbReference>
<dbReference type="REBASE" id="190421">
    <property type="entry name" value="M.Bce021ORF5376P"/>
</dbReference>
<dbReference type="REBASE" id="3421">
    <property type="entry name" value="M.HhaI"/>
</dbReference>
<dbReference type="BRENDA" id="2.1.1.37">
    <property type="organism ID" value="2531"/>
</dbReference>
<dbReference type="SABIO-RK" id="P05102"/>
<dbReference type="EvolutionaryTrace" id="P05102"/>
<dbReference type="PRO" id="PR:P05102"/>
<dbReference type="GO" id="GO:0003886">
    <property type="term" value="F:DNA (cytosine-5-)-methyltransferase activity"/>
    <property type="evidence" value="ECO:0007669"/>
    <property type="project" value="UniProtKB-EC"/>
</dbReference>
<dbReference type="GO" id="GO:0003677">
    <property type="term" value="F:DNA binding"/>
    <property type="evidence" value="ECO:0007669"/>
    <property type="project" value="UniProtKB-KW"/>
</dbReference>
<dbReference type="GO" id="GO:0009307">
    <property type="term" value="P:DNA restriction-modification system"/>
    <property type="evidence" value="ECO:0007669"/>
    <property type="project" value="UniProtKB-KW"/>
</dbReference>
<dbReference type="GO" id="GO:0032259">
    <property type="term" value="P:methylation"/>
    <property type="evidence" value="ECO:0007669"/>
    <property type="project" value="UniProtKB-KW"/>
</dbReference>
<dbReference type="CDD" id="cd00315">
    <property type="entry name" value="Cyt_C5_DNA_methylase"/>
    <property type="match status" value="1"/>
</dbReference>
<dbReference type="Gene3D" id="3.90.120.10">
    <property type="entry name" value="DNA Methylase, subunit A, domain 2"/>
    <property type="match status" value="1"/>
</dbReference>
<dbReference type="Gene3D" id="3.40.50.150">
    <property type="entry name" value="Vaccinia Virus protein VP39"/>
    <property type="match status" value="1"/>
</dbReference>
<dbReference type="InterPro" id="IPR050750">
    <property type="entry name" value="C5-MTase"/>
</dbReference>
<dbReference type="InterPro" id="IPR018117">
    <property type="entry name" value="C5_DNA_meth_AS"/>
</dbReference>
<dbReference type="InterPro" id="IPR001525">
    <property type="entry name" value="C5_MeTfrase"/>
</dbReference>
<dbReference type="InterPro" id="IPR031303">
    <property type="entry name" value="C5_meth_CS"/>
</dbReference>
<dbReference type="InterPro" id="IPR029063">
    <property type="entry name" value="SAM-dependent_MTases_sf"/>
</dbReference>
<dbReference type="NCBIfam" id="TIGR00675">
    <property type="entry name" value="dcm"/>
    <property type="match status" value="1"/>
</dbReference>
<dbReference type="PANTHER" id="PTHR46098">
    <property type="entry name" value="TRNA (CYTOSINE(38)-C(5))-METHYLTRANSFERASE"/>
    <property type="match status" value="1"/>
</dbReference>
<dbReference type="PANTHER" id="PTHR46098:SF1">
    <property type="entry name" value="TRNA (CYTOSINE(38)-C(5))-METHYLTRANSFERASE"/>
    <property type="match status" value="1"/>
</dbReference>
<dbReference type="Pfam" id="PF00145">
    <property type="entry name" value="DNA_methylase"/>
    <property type="match status" value="1"/>
</dbReference>
<dbReference type="PRINTS" id="PR00105">
    <property type="entry name" value="C5METTRFRASE"/>
</dbReference>
<dbReference type="SUPFAM" id="SSF53335">
    <property type="entry name" value="S-adenosyl-L-methionine-dependent methyltransferases"/>
    <property type="match status" value="1"/>
</dbReference>
<dbReference type="PROSITE" id="PS00094">
    <property type="entry name" value="C5_MTASE_1"/>
    <property type="match status" value="1"/>
</dbReference>
<dbReference type="PROSITE" id="PS00095">
    <property type="entry name" value="C5_MTASE_2"/>
    <property type="match status" value="1"/>
</dbReference>
<dbReference type="PROSITE" id="PS51679">
    <property type="entry name" value="SAM_MT_C5"/>
    <property type="match status" value="1"/>
</dbReference>
<evidence type="ECO:0000255" key="1">
    <source>
        <dbReference type="PROSITE-ProRule" id="PRU01016"/>
    </source>
</evidence>
<evidence type="ECO:0000255" key="2">
    <source>
        <dbReference type="PROSITE-ProRule" id="PRU10018"/>
    </source>
</evidence>
<evidence type="ECO:0000269" key="3">
    <source>
    </source>
</evidence>
<evidence type="ECO:0000269" key="4">
    <source>
    </source>
</evidence>
<evidence type="ECO:0000269" key="5">
    <source>
    </source>
</evidence>
<evidence type="ECO:0000269" key="6">
    <source>
    </source>
</evidence>
<evidence type="ECO:0000303" key="7">
    <source>
    </source>
</evidence>
<evidence type="ECO:0000303" key="8">
    <source>
    </source>
</evidence>
<evidence type="ECO:0000305" key="9"/>
<evidence type="ECO:0000305" key="10">
    <source>
    </source>
</evidence>
<evidence type="ECO:0007744" key="11">
    <source>
        <dbReference type="PDB" id="1HMY"/>
    </source>
</evidence>
<evidence type="ECO:0007829" key="12">
    <source>
        <dbReference type="PDB" id="1HMY"/>
    </source>
</evidence>
<evidence type="ECO:0007829" key="13">
    <source>
        <dbReference type="PDB" id="1SVU"/>
    </source>
</evidence>
<evidence type="ECO:0007829" key="14">
    <source>
        <dbReference type="PDB" id="2C7P"/>
    </source>
</evidence>
<evidence type="ECO:0007829" key="15">
    <source>
        <dbReference type="PDB" id="5CIY"/>
    </source>
</evidence>
<evidence type="ECO:0007829" key="16">
    <source>
        <dbReference type="PDB" id="9MHT"/>
    </source>
</evidence>
<protein>
    <recommendedName>
        <fullName evidence="7">Type II methyltransferase M.HhaI</fullName>
        <shortName evidence="8">M.HhaI</shortName>
        <ecNumber evidence="4">2.1.1.37</ecNumber>
    </recommendedName>
    <alternativeName>
        <fullName>Cytosine-specific methyltransferase HhaI</fullName>
    </alternativeName>
    <alternativeName>
        <fullName>Modification methylase HhaI</fullName>
    </alternativeName>
</protein>
<organism>
    <name type="scientific">Haemophilus parahaemolyticus</name>
    <dbReference type="NCBI Taxonomy" id="735"/>
    <lineage>
        <taxon>Bacteria</taxon>
        <taxon>Pseudomonadati</taxon>
        <taxon>Pseudomonadota</taxon>
        <taxon>Gammaproteobacteria</taxon>
        <taxon>Pasteurellales</taxon>
        <taxon>Pasteurellaceae</taxon>
        <taxon>Haemophilus</taxon>
    </lineage>
</organism>
<proteinExistence type="evidence at protein level"/>
<keyword id="KW-0002">3D-structure</keyword>
<keyword id="KW-0238">DNA-binding</keyword>
<keyword id="KW-0489">Methyltransferase</keyword>
<keyword id="KW-0680">Restriction system</keyword>
<keyword id="KW-0949">S-adenosyl-L-methionine</keyword>
<keyword id="KW-0808">Transferase</keyword>
<name>MTH1_HAEPH</name>
<reference key="1">
    <citation type="journal article" date="1987" name="J. Biol. Chem.">
        <title>Cloning, sequencing, in vivo promoter mapping, and expression in Escherichia coli of the gene for the HhaI methyltransferase.</title>
        <authorList>
            <person name="Caserta M."/>
            <person name="Zacharias W."/>
            <person name="Nwankwo D.O."/>
            <person name="Wilson G.G."/>
            <person name="Wells R.D."/>
        </authorList>
    </citation>
    <scope>NUCLEOTIDE SEQUENCE [GENOMIC DNA]</scope>
    <scope>FUNCTION</scope>
    <source>
        <strain>ATCC 10014 / CCUG 3716 / NCTC 8479 / 536</strain>
    </source>
</reference>
<reference key="2">
    <citation type="journal article" date="1993" name="Nucleic Acids Res.">
        <title>The DNA binding affinity of HhaI methylase is increased by a single amino acid substitution in the catalytic center.</title>
        <authorList>
            <person name="Mi S."/>
            <person name="Roberts R.J."/>
        </authorList>
    </citation>
    <scope>FUNCTION</scope>
    <scope>MUTAGENESIS OF CYS-81</scope>
    <scope>DNA-BINDING</scope>
    <scope>ACTIVE SITE</scope>
</reference>
<reference key="3">
    <citation type="journal article" date="1995" name="Nucleic Acids Res.">
        <title>Functional analysis of Gln-237 mutants of HhaI methyltransferase.</title>
        <authorList>
            <person name="Mi S."/>
            <person name="Alonso D."/>
            <person name="Roberts R.J."/>
        </authorList>
    </citation>
    <scope>FUNCTION</scope>
    <scope>CATALYTIC ACTIVITY</scope>
    <scope>BIOPHYSICOCHEMICAL PROPERTIES</scope>
    <scope>MUTAGENESIS OF GLN-237</scope>
</reference>
<reference key="4">
    <citation type="journal article" date="2003" name="Nucleic Acids Res.">
        <title>A nomenclature for restriction enzymes, DNA methyltransferases, homing endonucleases and their genes.</title>
        <authorList>
            <person name="Roberts R.J."/>
            <person name="Belfort M."/>
            <person name="Bestor T."/>
            <person name="Bhagwat A.S."/>
            <person name="Bickle T.A."/>
            <person name="Bitinaite J."/>
            <person name="Blumenthal R.M."/>
            <person name="Degtyarev S.K."/>
            <person name="Dryden D.T."/>
            <person name="Dybvig K."/>
            <person name="Firman K."/>
            <person name="Gromova E.S."/>
            <person name="Gumport R.I."/>
            <person name="Halford S.E."/>
            <person name="Hattman S."/>
            <person name="Heitman J."/>
            <person name="Hornby D.P."/>
            <person name="Janulaitis A."/>
            <person name="Jeltsch A."/>
            <person name="Josephsen J."/>
            <person name="Kiss A."/>
            <person name="Klaenhammer T.R."/>
            <person name="Kobayashi I."/>
            <person name="Kong H."/>
            <person name="Krueger D.H."/>
            <person name="Lacks S."/>
            <person name="Marinus M.G."/>
            <person name="Miyahara M."/>
            <person name="Morgan R.D."/>
            <person name="Murray N.E."/>
            <person name="Nagaraja V."/>
            <person name="Piekarowicz A."/>
            <person name="Pingoud A."/>
            <person name="Raleigh E."/>
            <person name="Rao D.N."/>
            <person name="Reich N."/>
            <person name="Repin V.E."/>
            <person name="Selker E.U."/>
            <person name="Shaw P.C."/>
            <person name="Stein D.C."/>
            <person name="Stoddard B.L."/>
            <person name="Szybalski W."/>
            <person name="Trautner T.A."/>
            <person name="Van Etten J.L."/>
            <person name="Vitor J.M."/>
            <person name="Wilson G.G."/>
            <person name="Xu S.Y."/>
        </authorList>
    </citation>
    <scope>NOMENCLATURE</scope>
</reference>
<reference evidence="11" key="5">
    <citation type="journal article" date="1993" name="Cell">
        <title>Crystal structure of the HhaI DNA methyltransferase complexed with S-adenosyl-L-methionine.</title>
        <authorList>
            <person name="Cheng X."/>
            <person name="Kumar S."/>
            <person name="Posfai J."/>
            <person name="Pflugrath J.W."/>
            <person name="Roberts R.J."/>
        </authorList>
    </citation>
    <scope>X-RAY CRYSTALLOGRAPHY (2.5 ANGSTROMS) IN COMPLEX WITH S-ADENOSYL-L-METHIONINE</scope>
    <scope>SUBUNIT</scope>
</reference>
<reference key="6">
    <citation type="journal article" date="1994" name="Cell">
        <title>HhaI methyltransferase flips its target base out of the DNA helix.</title>
        <authorList>
            <person name="Klimasauskas S."/>
            <person name="Kumar S."/>
            <person name="Roberts R.J."/>
            <person name="Cheng X."/>
        </authorList>
    </citation>
    <scope>X-RAY CRYSTALLOGRAPHY (2.8 ANGSTROMS)</scope>
</reference>
<reference key="7">
    <citation type="journal article" date="1997" name="Nucleic Acids Res.">
        <title>DNA containing 4'-thio-2'-deoxycytidine inhibits methylation by HhaI methyltransferase.</title>
        <authorList>
            <person name="Kumar S."/>
            <person name="Horton J.R."/>
            <person name="Jones G.D."/>
            <person name="Walker R.T."/>
            <person name="Roberts R.J."/>
            <person name="Cheng X."/>
        </authorList>
    </citation>
    <scope>X-RAY CRYSTALLOGRAPHY (2.05 ANGSTROMS)</scope>
</reference>
<reference key="8">
    <citation type="journal article" date="1998" name="Nat. Struct. Biol.">
        <title>Structures of HhaI methyltransferase complexed with substrates containing mismatches at the target base.</title>
        <authorList>
            <person name="O'Gara M."/>
            <person name="Horton J.R."/>
            <person name="Roberts R.J."/>
            <person name="Cheng X."/>
        </authorList>
    </citation>
    <scope>X-RAY CRYSTALLOGRAPHY (2.87 ANGSTROMS)</scope>
</reference>
<reference key="9">
    <citation type="journal article" date="1999" name="J. Mol. Biol.">
        <title>Structure of a binary complex of HhaI methyltransferase with S-adenosyl-L-methionine formed in the presence of a short non-specific DNA oligonucleotide.</title>
        <authorList>
            <person name="O'Gara M."/>
            <person name="Zhang X."/>
            <person name="Roberts R.J."/>
            <person name="Cheng X."/>
        </authorList>
    </citation>
    <scope>X-RAY CRYSTALLOGRAPHY (2.61 ANGSTROMS)</scope>
</reference>
<sequence length="327" mass="36996">MIEIKDKQLTGLRFIDLFAGLGGFRLALESCGAECVYSNEWDKYAQEVYEMNFGEKPEGDITQVNEKTIPDHDILCAGFPCQAFSISGKQKGFEDSRGTLFFDIARIVREKKPKVVFMENVKNFASHDNGNTLEVVKNTMNELDYSFHAKVLNALDYGIPQKRERIYMICFRNDLNIQNFQFPKPFELNTFVKDLLLPDSEVEHLVIDRKDLVMTNQEIEQTTPKTVRLGIVGKGGQGERIYSTRGIAITLSAYGGGIFAKTGGYLVNGKTRKLHPRECARVMGYPDSYKVHPSTSQAYKQFGNSVVINVLQYIAYNIGSSLNFKPY</sequence>
<feature type="chain" id="PRO_0000087882" description="Type II methyltransferase M.HhaI">
    <location>
        <begin position="1"/>
        <end position="327"/>
    </location>
</feature>
<feature type="domain" description="SAM-dependent MTase C5-type" evidence="1">
    <location>
        <begin position="12"/>
        <end position="325"/>
    </location>
</feature>
<feature type="active site" evidence="10">
    <location>
        <position position="81"/>
    </location>
</feature>
<feature type="mutagenesis site" description="Cells die, loss of methyltransferase activity, binds DNA about 3-fold more tightly." evidence="6">
    <original>C</original>
    <variation>G</variation>
    <location>
        <position position="81"/>
    </location>
</feature>
<feature type="mutagenesis site" description="Cells grow as well as wild-type, loss of methyltransferase activity, DNA affinity is about 20-fold lower than wild-type." evidence="6">
    <original>C</original>
    <variation>H</variation>
    <location>
        <position position="81"/>
    </location>
</feature>
<feature type="mutagenesis site" description="Cells grow as well as wild-type, loss of methyltransferase activity, DNA affinity is about 10-fold lower than wild-type." evidence="6">
    <original>C</original>
    <variation>R</variation>
    <location>
        <position position="81"/>
    </location>
</feature>
<feature type="mutagenesis site" description="Cells grow as well as wild-type, loss of methyltransferase activity, DNA affinity is about the same as wild-type." evidence="6">
    <original>C</original>
    <variation>S</variation>
    <location>
        <position position="81"/>
    </location>
</feature>
<feature type="mutagenesis site" description="Decrease in enzyme activity due to 98%-99% loss of DNA-binding activity. No change in substrate specificity." evidence="4">
    <original>Q</original>
    <variation>X</variation>
    <location>
        <position position="237"/>
    </location>
</feature>
<feature type="turn" evidence="15">
    <location>
        <begin position="8"/>
        <end position="11"/>
    </location>
</feature>
<feature type="strand" evidence="15">
    <location>
        <begin position="13"/>
        <end position="17"/>
    </location>
</feature>
<feature type="turn" evidence="14">
    <location>
        <begin position="20"/>
        <end position="22"/>
    </location>
</feature>
<feature type="helix" evidence="15">
    <location>
        <begin position="23"/>
        <end position="30"/>
    </location>
</feature>
<feature type="strand" evidence="15">
    <location>
        <begin position="34"/>
        <end position="39"/>
    </location>
</feature>
<feature type="helix" evidence="15">
    <location>
        <begin position="43"/>
        <end position="53"/>
    </location>
</feature>
<feature type="helix" evidence="15">
    <location>
        <begin position="61"/>
        <end position="63"/>
    </location>
</feature>
<feature type="helix" evidence="15">
    <location>
        <begin position="66"/>
        <end position="68"/>
    </location>
</feature>
<feature type="strand" evidence="15">
    <location>
        <begin position="73"/>
        <end position="78"/>
    </location>
</feature>
<feature type="turn" evidence="15">
    <location>
        <begin position="82"/>
        <end position="84"/>
    </location>
</feature>
<feature type="turn" evidence="16">
    <location>
        <begin position="86"/>
        <end position="89"/>
    </location>
</feature>
<feature type="helix" evidence="15">
    <location>
        <begin position="92"/>
        <end position="94"/>
    </location>
</feature>
<feature type="helix" evidence="15">
    <location>
        <begin position="96"/>
        <end position="98"/>
    </location>
</feature>
<feature type="helix" evidence="15">
    <location>
        <begin position="100"/>
        <end position="111"/>
    </location>
</feature>
<feature type="strand" evidence="15">
    <location>
        <begin position="114"/>
        <end position="121"/>
    </location>
</feature>
<feature type="helix" evidence="15">
    <location>
        <begin position="122"/>
        <end position="125"/>
    </location>
</feature>
<feature type="helix" evidence="15">
    <location>
        <begin position="127"/>
        <end position="130"/>
    </location>
</feature>
<feature type="helix" evidence="15">
    <location>
        <begin position="131"/>
        <end position="142"/>
    </location>
</feature>
<feature type="strand" evidence="15">
    <location>
        <begin position="148"/>
        <end position="153"/>
    </location>
</feature>
<feature type="helix" evidence="15">
    <location>
        <begin position="154"/>
        <end position="156"/>
    </location>
</feature>
<feature type="strand" evidence="15">
    <location>
        <begin position="164"/>
        <end position="172"/>
    </location>
</feature>
<feature type="helix" evidence="15">
    <location>
        <begin position="173"/>
        <end position="175"/>
    </location>
</feature>
<feature type="helix" evidence="15">
    <location>
        <begin position="192"/>
        <end position="194"/>
    </location>
</feature>
<feature type="helix" evidence="15">
    <location>
        <begin position="199"/>
        <end position="201"/>
    </location>
</feature>
<feature type="helix" evidence="15">
    <location>
        <begin position="203"/>
        <end position="205"/>
    </location>
</feature>
<feature type="strand" evidence="12">
    <location>
        <begin position="213"/>
        <end position="216"/>
    </location>
</feature>
<feature type="strand" evidence="15">
    <location>
        <begin position="228"/>
        <end position="232"/>
    </location>
</feature>
<feature type="strand" evidence="15">
    <location>
        <begin position="240"/>
        <end position="243"/>
    </location>
</feature>
<feature type="strand" evidence="13">
    <location>
        <begin position="244"/>
        <end position="246"/>
    </location>
</feature>
<feature type="turn" evidence="15">
    <location>
        <begin position="258"/>
        <end position="262"/>
    </location>
</feature>
<feature type="strand" evidence="15">
    <location>
        <begin position="264"/>
        <end position="267"/>
    </location>
</feature>
<feature type="strand" evidence="15">
    <location>
        <begin position="270"/>
        <end position="272"/>
    </location>
</feature>
<feature type="helix" evidence="15">
    <location>
        <begin position="276"/>
        <end position="282"/>
    </location>
</feature>
<feature type="helix" evidence="15">
    <location>
        <begin position="295"/>
        <end position="304"/>
    </location>
</feature>
<feature type="helix" evidence="15">
    <location>
        <begin position="308"/>
        <end position="323"/>
    </location>
</feature>
<accession>P05102</accession>
<gene>
    <name type="primary">hhaIM</name>
</gene>
<comment type="function">
    <text evidence="3 4 7">A methylase, recognizes the double-stranded sequence 5'-GCGC-3', methylates C-2 on both strands, and protects the DNA from cleavage by the HhaI endonuclease.</text>
</comment>
<comment type="catalytic activity">
    <reaction evidence="2 4">
        <text>a 2'-deoxycytidine in DNA + S-adenosyl-L-methionine = a 5-methyl-2'-deoxycytidine in DNA + S-adenosyl-L-homocysteine + H(+)</text>
        <dbReference type="Rhea" id="RHEA:13681"/>
        <dbReference type="Rhea" id="RHEA-COMP:11369"/>
        <dbReference type="Rhea" id="RHEA-COMP:11370"/>
        <dbReference type="ChEBI" id="CHEBI:15378"/>
        <dbReference type="ChEBI" id="CHEBI:57856"/>
        <dbReference type="ChEBI" id="CHEBI:59789"/>
        <dbReference type="ChEBI" id="CHEBI:85452"/>
        <dbReference type="ChEBI" id="CHEBI:85454"/>
        <dbReference type="EC" id="2.1.1.37"/>
    </reaction>
</comment>
<comment type="biophysicochemical properties">
    <kinetics>
        <KM evidence="4">69 nM for DNA</KM>
        <KM evidence="4">15 nM for S-adenosyl-L-methionine (SAM)</KM>
        <Vmax evidence="4">87.0 nmol/min/mg enzyme</Vmax>
    </kinetics>
</comment>
<comment type="subunit">
    <text evidence="5">Monomer.</text>
</comment>
<comment type="similarity">
    <text evidence="1">Belongs to the class I-like SAM-binding methyltransferase superfamily. C5-methyltransferase family.</text>
</comment>
<comment type="caution">
    <text evidence="9">Strain ATCC 10014 was originally thought to originate from H.haemolyticus.</text>
</comment>